<evidence type="ECO:0000255" key="1">
    <source>
        <dbReference type="HAMAP-Rule" id="MF_00337"/>
    </source>
</evidence>
<evidence type="ECO:0000305" key="2"/>
<proteinExistence type="inferred from homology"/>
<comment type="function">
    <text evidence="1">Bidirectionally degrades single-stranded DNA into large acid-insoluble oligonucleotides, which are then degraded further into small acid-soluble oligonucleotides.</text>
</comment>
<comment type="catalytic activity">
    <reaction evidence="1">
        <text>Exonucleolytic cleavage in either 5'- to 3'- or 3'- to 5'-direction to yield nucleoside 5'-phosphates.</text>
        <dbReference type="EC" id="3.1.11.6"/>
    </reaction>
</comment>
<comment type="subunit">
    <text evidence="1">Heterooligomer composed of large and small subunits.</text>
</comment>
<comment type="subcellular location">
    <subcellularLocation>
        <location evidence="1">Cytoplasm</location>
    </subcellularLocation>
</comment>
<comment type="similarity">
    <text evidence="1 2">Belongs to the XseB family.</text>
</comment>
<keyword id="KW-0963">Cytoplasm</keyword>
<keyword id="KW-0269">Exonuclease</keyword>
<keyword id="KW-0378">Hydrolase</keyword>
<keyword id="KW-0540">Nuclease</keyword>
<keyword id="KW-1185">Reference proteome</keyword>
<dbReference type="EC" id="3.1.11.6" evidence="1"/>
<dbReference type="EMBL" id="AE001273">
    <property type="status" value="NOT_ANNOTATED_CDS"/>
    <property type="molecule type" value="Genomic_DNA"/>
</dbReference>
<dbReference type="SMR" id="P58001"/>
<dbReference type="FunCoup" id="P58001">
    <property type="interactions" value="124"/>
</dbReference>
<dbReference type="InParanoid" id="P58001"/>
<dbReference type="Proteomes" id="UP000000431">
    <property type="component" value="Chromosome"/>
</dbReference>
<dbReference type="GO" id="GO:0005829">
    <property type="term" value="C:cytosol"/>
    <property type="evidence" value="ECO:0000318"/>
    <property type="project" value="GO_Central"/>
</dbReference>
<dbReference type="GO" id="GO:0009318">
    <property type="term" value="C:exodeoxyribonuclease VII complex"/>
    <property type="evidence" value="ECO:0007669"/>
    <property type="project" value="InterPro"/>
</dbReference>
<dbReference type="GO" id="GO:0008855">
    <property type="term" value="F:exodeoxyribonuclease VII activity"/>
    <property type="evidence" value="ECO:0000318"/>
    <property type="project" value="GO_Central"/>
</dbReference>
<dbReference type="GO" id="GO:0006308">
    <property type="term" value="P:DNA catabolic process"/>
    <property type="evidence" value="ECO:0007669"/>
    <property type="project" value="UniProtKB-UniRule"/>
</dbReference>
<dbReference type="Gene3D" id="1.10.287.1040">
    <property type="entry name" value="Exonuclease VII, small subunit"/>
    <property type="match status" value="1"/>
</dbReference>
<dbReference type="HAMAP" id="MF_00337">
    <property type="entry name" value="Exonuc_7_S"/>
    <property type="match status" value="1"/>
</dbReference>
<dbReference type="InterPro" id="IPR003761">
    <property type="entry name" value="Exonuc_VII_S"/>
</dbReference>
<dbReference type="InterPro" id="IPR037004">
    <property type="entry name" value="Exonuc_VII_ssu_sf"/>
</dbReference>
<dbReference type="NCBIfam" id="NF002140">
    <property type="entry name" value="PRK00977.1-4"/>
    <property type="match status" value="1"/>
</dbReference>
<dbReference type="NCBIfam" id="TIGR01280">
    <property type="entry name" value="xseB"/>
    <property type="match status" value="1"/>
</dbReference>
<dbReference type="PANTHER" id="PTHR34137">
    <property type="entry name" value="EXODEOXYRIBONUCLEASE 7 SMALL SUBUNIT"/>
    <property type="match status" value="1"/>
</dbReference>
<dbReference type="PANTHER" id="PTHR34137:SF1">
    <property type="entry name" value="EXODEOXYRIBONUCLEASE 7 SMALL SUBUNIT"/>
    <property type="match status" value="1"/>
</dbReference>
<dbReference type="Pfam" id="PF02609">
    <property type="entry name" value="Exonuc_VII_S"/>
    <property type="match status" value="1"/>
</dbReference>
<dbReference type="PIRSF" id="PIRSF006488">
    <property type="entry name" value="Exonuc_VII_S"/>
    <property type="match status" value="1"/>
</dbReference>
<dbReference type="SUPFAM" id="SSF116842">
    <property type="entry name" value="XseB-like"/>
    <property type="match status" value="1"/>
</dbReference>
<feature type="chain" id="PRO_0000206937" description="Exodeoxyribonuclease 7 small subunit">
    <location>
        <begin position="1"/>
        <end position="72"/>
    </location>
</feature>
<gene>
    <name evidence="1" type="primary">xseB</name>
    <name type="ordered locus">CT_329.1</name>
</gene>
<accession>P58001</accession>
<sequence>MTKKAKNVEKISFEDAMKRLEEIIDLMNQPTTSLEASLALYEEADQLMRICESRIQEVEARIKQLSDQRSES</sequence>
<organism>
    <name type="scientific">Chlamydia trachomatis serovar D (strain ATCC VR-885 / DSM 19411 / UW-3/Cx)</name>
    <dbReference type="NCBI Taxonomy" id="272561"/>
    <lineage>
        <taxon>Bacteria</taxon>
        <taxon>Pseudomonadati</taxon>
        <taxon>Chlamydiota</taxon>
        <taxon>Chlamydiia</taxon>
        <taxon>Chlamydiales</taxon>
        <taxon>Chlamydiaceae</taxon>
        <taxon>Chlamydia/Chlamydophila group</taxon>
        <taxon>Chlamydia</taxon>
    </lineage>
</organism>
<name>EX7S_CHLTR</name>
<protein>
    <recommendedName>
        <fullName evidence="1">Exodeoxyribonuclease 7 small subunit</fullName>
        <ecNumber evidence="1">3.1.11.6</ecNumber>
    </recommendedName>
    <alternativeName>
        <fullName evidence="1">Exodeoxyribonuclease VII small subunit</fullName>
        <shortName evidence="1">Exonuclease VII small subunit</shortName>
    </alternativeName>
</protein>
<reference key="1">
    <citation type="journal article" date="1998" name="Science">
        <title>Genome sequence of an obligate intracellular pathogen of humans: Chlamydia trachomatis.</title>
        <authorList>
            <person name="Stephens R.S."/>
            <person name="Kalman S."/>
            <person name="Lammel C.J."/>
            <person name="Fan J."/>
            <person name="Marathe R."/>
            <person name="Aravind L."/>
            <person name="Mitchell W.P."/>
            <person name="Olinger L."/>
            <person name="Tatusov R.L."/>
            <person name="Zhao Q."/>
            <person name="Koonin E.V."/>
            <person name="Davis R.W."/>
        </authorList>
    </citation>
    <scope>NUCLEOTIDE SEQUENCE [LARGE SCALE GENOMIC DNA]</scope>
    <source>
        <strain>ATCC VR-885 / DSM 19411 / UW-3/Cx</strain>
    </source>
</reference>
<reference key="2">
    <citation type="unpublished observations" date="2001-03">
        <authorList>
            <person name="Medigue C."/>
            <person name="Bocs S."/>
        </authorList>
    </citation>
    <scope>IDENTIFICATION</scope>
</reference>